<proteinExistence type="inferred from homology"/>
<dbReference type="EC" id="6.3.5.-" evidence="1"/>
<dbReference type="EMBL" id="CP000237">
    <property type="protein sequence ID" value="ABD45943.1"/>
    <property type="molecule type" value="Genomic_DNA"/>
</dbReference>
<dbReference type="RefSeq" id="WP_011451491.1">
    <property type="nucleotide sequence ID" value="NC_007798.1"/>
</dbReference>
<dbReference type="SMR" id="Q2GEW1"/>
<dbReference type="STRING" id="222891.NSE_0084"/>
<dbReference type="KEGG" id="nse:NSE_0084"/>
<dbReference type="eggNOG" id="COG0064">
    <property type="taxonomic scope" value="Bacteria"/>
</dbReference>
<dbReference type="HOGENOM" id="CLU_019240_0_0_5"/>
<dbReference type="OrthoDB" id="9804078at2"/>
<dbReference type="Proteomes" id="UP000001942">
    <property type="component" value="Chromosome"/>
</dbReference>
<dbReference type="GO" id="GO:0030956">
    <property type="term" value="C:glutamyl-tRNA(Gln) amidotransferase complex"/>
    <property type="evidence" value="ECO:0007669"/>
    <property type="project" value="TreeGrafter"/>
</dbReference>
<dbReference type="GO" id="GO:0050566">
    <property type="term" value="F:asparaginyl-tRNA synthase (glutamine-hydrolyzing) activity"/>
    <property type="evidence" value="ECO:0007669"/>
    <property type="project" value="RHEA"/>
</dbReference>
<dbReference type="GO" id="GO:0005524">
    <property type="term" value="F:ATP binding"/>
    <property type="evidence" value="ECO:0007669"/>
    <property type="project" value="UniProtKB-KW"/>
</dbReference>
<dbReference type="GO" id="GO:0050567">
    <property type="term" value="F:glutaminyl-tRNA synthase (glutamine-hydrolyzing) activity"/>
    <property type="evidence" value="ECO:0007669"/>
    <property type="project" value="UniProtKB-UniRule"/>
</dbReference>
<dbReference type="GO" id="GO:0070681">
    <property type="term" value="P:glutaminyl-tRNAGln biosynthesis via transamidation"/>
    <property type="evidence" value="ECO:0007669"/>
    <property type="project" value="TreeGrafter"/>
</dbReference>
<dbReference type="GO" id="GO:0006412">
    <property type="term" value="P:translation"/>
    <property type="evidence" value="ECO:0007669"/>
    <property type="project" value="UniProtKB-UniRule"/>
</dbReference>
<dbReference type="FunFam" id="1.10.10.410:FF:000001">
    <property type="entry name" value="Aspartyl/glutamyl-tRNA(Asn/Gln) amidotransferase subunit B"/>
    <property type="match status" value="1"/>
</dbReference>
<dbReference type="Gene3D" id="1.10.10.410">
    <property type="match status" value="1"/>
</dbReference>
<dbReference type="Gene3D" id="1.10.150.380">
    <property type="entry name" value="GatB domain, N-terminal subdomain"/>
    <property type="match status" value="1"/>
</dbReference>
<dbReference type="HAMAP" id="MF_00121">
    <property type="entry name" value="GatB"/>
    <property type="match status" value="1"/>
</dbReference>
<dbReference type="InterPro" id="IPR017959">
    <property type="entry name" value="Asn/Gln-tRNA_amidoTrfase_suB/E"/>
</dbReference>
<dbReference type="InterPro" id="IPR006075">
    <property type="entry name" value="Asn/Gln-tRNA_Trfase_suB/E_cat"/>
</dbReference>
<dbReference type="InterPro" id="IPR018027">
    <property type="entry name" value="Asn/Gln_amidotransferase"/>
</dbReference>
<dbReference type="InterPro" id="IPR003789">
    <property type="entry name" value="Asn/Gln_tRNA_amidoTrase-B-like"/>
</dbReference>
<dbReference type="InterPro" id="IPR004413">
    <property type="entry name" value="GatB"/>
</dbReference>
<dbReference type="InterPro" id="IPR042114">
    <property type="entry name" value="GatB_C_1"/>
</dbReference>
<dbReference type="InterPro" id="IPR023168">
    <property type="entry name" value="GatB_Yqey_C_2"/>
</dbReference>
<dbReference type="InterPro" id="IPR017958">
    <property type="entry name" value="Gln-tRNA_amidoTrfase_suB_CS"/>
</dbReference>
<dbReference type="InterPro" id="IPR014746">
    <property type="entry name" value="Gln_synth/guanido_kin_cat_dom"/>
</dbReference>
<dbReference type="NCBIfam" id="TIGR00133">
    <property type="entry name" value="gatB"/>
    <property type="match status" value="1"/>
</dbReference>
<dbReference type="NCBIfam" id="NF004012">
    <property type="entry name" value="PRK05477.1-2"/>
    <property type="match status" value="1"/>
</dbReference>
<dbReference type="NCBIfam" id="NF004014">
    <property type="entry name" value="PRK05477.1-4"/>
    <property type="match status" value="1"/>
</dbReference>
<dbReference type="NCBIfam" id="NF004015">
    <property type="entry name" value="PRK05477.1-5"/>
    <property type="match status" value="1"/>
</dbReference>
<dbReference type="PANTHER" id="PTHR11659">
    <property type="entry name" value="GLUTAMYL-TRNA GLN AMIDOTRANSFERASE SUBUNIT B MITOCHONDRIAL AND PROKARYOTIC PET112-RELATED"/>
    <property type="match status" value="1"/>
</dbReference>
<dbReference type="PANTHER" id="PTHR11659:SF0">
    <property type="entry name" value="GLUTAMYL-TRNA(GLN) AMIDOTRANSFERASE SUBUNIT B, MITOCHONDRIAL"/>
    <property type="match status" value="1"/>
</dbReference>
<dbReference type="Pfam" id="PF02934">
    <property type="entry name" value="GatB_N"/>
    <property type="match status" value="1"/>
</dbReference>
<dbReference type="Pfam" id="PF02637">
    <property type="entry name" value="GatB_Yqey"/>
    <property type="match status" value="1"/>
</dbReference>
<dbReference type="SMART" id="SM00845">
    <property type="entry name" value="GatB_Yqey"/>
    <property type="match status" value="1"/>
</dbReference>
<dbReference type="SUPFAM" id="SSF89095">
    <property type="entry name" value="GatB/YqeY motif"/>
    <property type="match status" value="1"/>
</dbReference>
<dbReference type="SUPFAM" id="SSF55931">
    <property type="entry name" value="Glutamine synthetase/guanido kinase"/>
    <property type="match status" value="1"/>
</dbReference>
<dbReference type="PROSITE" id="PS01234">
    <property type="entry name" value="GATB"/>
    <property type="match status" value="1"/>
</dbReference>
<keyword id="KW-0067">ATP-binding</keyword>
<keyword id="KW-0436">Ligase</keyword>
<keyword id="KW-0547">Nucleotide-binding</keyword>
<keyword id="KW-0648">Protein biosynthesis</keyword>
<feature type="chain" id="PRO_0000241244" description="Aspartyl/glutamyl-tRNA(Asn/Gln) amidotransferase subunit B">
    <location>
        <begin position="1"/>
        <end position="488"/>
    </location>
</feature>
<reference key="1">
    <citation type="journal article" date="2006" name="PLoS Genet.">
        <title>Comparative genomics of emerging human ehrlichiosis agents.</title>
        <authorList>
            <person name="Dunning Hotopp J.C."/>
            <person name="Lin M."/>
            <person name="Madupu R."/>
            <person name="Crabtree J."/>
            <person name="Angiuoli S.V."/>
            <person name="Eisen J.A."/>
            <person name="Seshadri R."/>
            <person name="Ren Q."/>
            <person name="Wu M."/>
            <person name="Utterback T.R."/>
            <person name="Smith S."/>
            <person name="Lewis M."/>
            <person name="Khouri H."/>
            <person name="Zhang C."/>
            <person name="Niu H."/>
            <person name="Lin Q."/>
            <person name="Ohashi N."/>
            <person name="Zhi N."/>
            <person name="Nelson W.C."/>
            <person name="Brinkac L.M."/>
            <person name="Dodson R.J."/>
            <person name="Rosovitz M.J."/>
            <person name="Sundaram J.P."/>
            <person name="Daugherty S.C."/>
            <person name="Davidsen T."/>
            <person name="Durkin A.S."/>
            <person name="Gwinn M.L."/>
            <person name="Haft D.H."/>
            <person name="Selengut J.D."/>
            <person name="Sullivan S.A."/>
            <person name="Zafar N."/>
            <person name="Zhou L."/>
            <person name="Benahmed F."/>
            <person name="Forberger H."/>
            <person name="Halpin R."/>
            <person name="Mulligan S."/>
            <person name="Robinson J."/>
            <person name="White O."/>
            <person name="Rikihisa Y."/>
            <person name="Tettelin H."/>
        </authorList>
    </citation>
    <scope>NUCLEOTIDE SEQUENCE [LARGE SCALE GENOMIC DNA]</scope>
    <source>
        <strain>ATCC VR-367 / Miyayama</strain>
    </source>
</reference>
<sequence length="488" mass="54471">MYYIDGKTARWEVVIGLEVHAQILSKNKLFSDAPCDSTKGPNTAVTLFDAAMPGVLPVLNFNCVEKAIRAGLGLGGKINLYSVFERKHYFYPDLPHGYQITQNSYPIITGGCVRIRNPDKVIRINRIHIEQDAGKSIHNLAPGKTYIDLNRAGIPLMEIVSEPDISSPAEAVAYVDKLKLILQYVCASNANMEKGELRCDANVSVRRGGESGLGTRCEIKNLNSTKSLAQAIEHEAKRQVEVLESGGTIVVETKLFDVDTLSTIATRSKESATEYRYFADPDLLPLVLEEKYVEDIKASMPELPDERENRYVRELNLSPYDANVLVSNVNASRYFDALLELGHQPKLAARWITVELFGLLNKRGIKIVESPVTPALMDELLRLVHSAEISERTAKEVLRKSFEGMGSPKEIVERESLRQVTDDKVILGYVKEVLDENPTKLGEYFMGKEKMLAFLVGQVIKKSNGNASPHLVNKVLLEELERRRAQNG</sequence>
<organism>
    <name type="scientific">Neorickettsia sennetsu (strain ATCC VR-367 / Miyayama)</name>
    <name type="common">Ehrlichia sennetsu</name>
    <dbReference type="NCBI Taxonomy" id="222891"/>
    <lineage>
        <taxon>Bacteria</taxon>
        <taxon>Pseudomonadati</taxon>
        <taxon>Pseudomonadota</taxon>
        <taxon>Alphaproteobacteria</taxon>
        <taxon>Rickettsiales</taxon>
        <taxon>Anaplasmataceae</taxon>
        <taxon>Neorickettsia</taxon>
    </lineage>
</organism>
<comment type="function">
    <text evidence="1">Allows the formation of correctly charged Asn-tRNA(Asn) or Gln-tRNA(Gln) through the transamidation of misacylated Asp-tRNA(Asn) or Glu-tRNA(Gln) in organisms which lack either or both of asparaginyl-tRNA or glutaminyl-tRNA synthetases. The reaction takes place in the presence of glutamine and ATP through an activated phospho-Asp-tRNA(Asn) or phospho-Glu-tRNA(Gln).</text>
</comment>
<comment type="catalytic activity">
    <reaction evidence="1">
        <text>L-glutamyl-tRNA(Gln) + L-glutamine + ATP + H2O = L-glutaminyl-tRNA(Gln) + L-glutamate + ADP + phosphate + H(+)</text>
        <dbReference type="Rhea" id="RHEA:17521"/>
        <dbReference type="Rhea" id="RHEA-COMP:9681"/>
        <dbReference type="Rhea" id="RHEA-COMP:9684"/>
        <dbReference type="ChEBI" id="CHEBI:15377"/>
        <dbReference type="ChEBI" id="CHEBI:15378"/>
        <dbReference type="ChEBI" id="CHEBI:29985"/>
        <dbReference type="ChEBI" id="CHEBI:30616"/>
        <dbReference type="ChEBI" id="CHEBI:43474"/>
        <dbReference type="ChEBI" id="CHEBI:58359"/>
        <dbReference type="ChEBI" id="CHEBI:78520"/>
        <dbReference type="ChEBI" id="CHEBI:78521"/>
        <dbReference type="ChEBI" id="CHEBI:456216"/>
    </reaction>
</comment>
<comment type="catalytic activity">
    <reaction evidence="1">
        <text>L-aspartyl-tRNA(Asn) + L-glutamine + ATP + H2O = L-asparaginyl-tRNA(Asn) + L-glutamate + ADP + phosphate + 2 H(+)</text>
        <dbReference type="Rhea" id="RHEA:14513"/>
        <dbReference type="Rhea" id="RHEA-COMP:9674"/>
        <dbReference type="Rhea" id="RHEA-COMP:9677"/>
        <dbReference type="ChEBI" id="CHEBI:15377"/>
        <dbReference type="ChEBI" id="CHEBI:15378"/>
        <dbReference type="ChEBI" id="CHEBI:29985"/>
        <dbReference type="ChEBI" id="CHEBI:30616"/>
        <dbReference type="ChEBI" id="CHEBI:43474"/>
        <dbReference type="ChEBI" id="CHEBI:58359"/>
        <dbReference type="ChEBI" id="CHEBI:78515"/>
        <dbReference type="ChEBI" id="CHEBI:78516"/>
        <dbReference type="ChEBI" id="CHEBI:456216"/>
    </reaction>
</comment>
<comment type="subunit">
    <text evidence="1">Heterotrimer of A, B and C subunits.</text>
</comment>
<comment type="similarity">
    <text evidence="1">Belongs to the GatB/GatE family. GatB subfamily.</text>
</comment>
<protein>
    <recommendedName>
        <fullName evidence="1">Aspartyl/glutamyl-tRNA(Asn/Gln) amidotransferase subunit B</fullName>
        <shortName evidence="1">Asp/Glu-ADT subunit B</shortName>
        <ecNumber evidence="1">6.3.5.-</ecNumber>
    </recommendedName>
</protein>
<evidence type="ECO:0000255" key="1">
    <source>
        <dbReference type="HAMAP-Rule" id="MF_00121"/>
    </source>
</evidence>
<accession>Q2GEW1</accession>
<gene>
    <name evidence="1" type="primary">gatB</name>
    <name type="ordered locus">NSE_0084</name>
</gene>
<name>GATB_NEOSM</name>